<sequence>MNKILKNIINKSSINNVFKTSFNGGISSSSSSSSSYLNNNNNIIKSYNVQQKQQQRYYSSFEDDLSPKKLKEKILENETEEIRDFVRSQRLTKKTASPLEGMNRKERRKMTTKLYRNPDNLIRGGIVSPQPLIPAHIKKPKYVLGEPVIDFEIDDPIEIHTAESIEHMRVVGKMAKEVLEYAGTLVRPGITTDEIDKLVHQNIIDRGAYPSPLGYKGFPKSICTSINEVLCHGIPDDRPLEFGDIVKIDVTLYYNGYHGDTCATFPVGEIDSSSKRLIEATEKALYAAIGEVKDGALFNKIGKKIQLVANKYSLSVTPEFTGHGIGQLFHTAPFVFQCANEFDSVMKEGMIFTIEPVLVESTSPYAEWKMWDDKWTVSSREGGWSAQFEHTILVTKDGYEILTK</sequence>
<proteinExistence type="inferred from homology"/>
<name>MAP12_DICDI</name>
<accession>Q54VU7</accession>
<organism>
    <name type="scientific">Dictyostelium discoideum</name>
    <name type="common">Social amoeba</name>
    <dbReference type="NCBI Taxonomy" id="44689"/>
    <lineage>
        <taxon>Eukaryota</taxon>
        <taxon>Amoebozoa</taxon>
        <taxon>Evosea</taxon>
        <taxon>Eumycetozoa</taxon>
        <taxon>Dictyostelia</taxon>
        <taxon>Dictyosteliales</taxon>
        <taxon>Dictyosteliaceae</taxon>
        <taxon>Dictyostelium</taxon>
    </lineage>
</organism>
<gene>
    <name type="primary">metap1d</name>
    <name type="synonym">map1d</name>
    <name type="ORF">DDB_G0280127</name>
</gene>
<keyword id="KW-0031">Aminopeptidase</keyword>
<keyword id="KW-0378">Hydrolase</keyword>
<keyword id="KW-0479">Metal-binding</keyword>
<keyword id="KW-0496">Mitochondrion</keyword>
<keyword id="KW-0645">Protease</keyword>
<keyword id="KW-1185">Reference proteome</keyword>
<keyword id="KW-0809">Transit peptide</keyword>
<dbReference type="EC" id="3.4.11.18" evidence="1"/>
<dbReference type="EMBL" id="AAFI02000035">
    <property type="protein sequence ID" value="EAL67290.1"/>
    <property type="molecule type" value="Genomic_DNA"/>
</dbReference>
<dbReference type="RefSeq" id="XP_641258.1">
    <property type="nucleotide sequence ID" value="XM_636166.1"/>
</dbReference>
<dbReference type="SMR" id="Q54VU7"/>
<dbReference type="FunCoup" id="Q54VU7">
    <property type="interactions" value="15"/>
</dbReference>
<dbReference type="STRING" id="44689.Q54VU7"/>
<dbReference type="MEROPS" id="M24.A06"/>
<dbReference type="PaxDb" id="44689-DDB0235404"/>
<dbReference type="EnsemblProtists" id="EAL67290">
    <property type="protein sequence ID" value="EAL67290"/>
    <property type="gene ID" value="DDB_G0280127"/>
</dbReference>
<dbReference type="GeneID" id="8622390"/>
<dbReference type="KEGG" id="ddi:DDB_G0280127"/>
<dbReference type="dictyBase" id="DDB_G0280127">
    <property type="gene designation" value="map1d"/>
</dbReference>
<dbReference type="VEuPathDB" id="AmoebaDB:DDB_G0280127"/>
<dbReference type="eggNOG" id="KOG2738">
    <property type="taxonomic scope" value="Eukaryota"/>
</dbReference>
<dbReference type="HOGENOM" id="CLU_015857_1_5_1"/>
<dbReference type="InParanoid" id="Q54VU7"/>
<dbReference type="OMA" id="RGAESCY"/>
<dbReference type="PhylomeDB" id="Q54VU7"/>
<dbReference type="PRO" id="PR:Q54VU7"/>
<dbReference type="Proteomes" id="UP000002195">
    <property type="component" value="Chromosome 3"/>
</dbReference>
<dbReference type="GO" id="GO:0005829">
    <property type="term" value="C:cytosol"/>
    <property type="evidence" value="ECO:0000318"/>
    <property type="project" value="GO_Central"/>
</dbReference>
<dbReference type="GO" id="GO:0005739">
    <property type="term" value="C:mitochondrion"/>
    <property type="evidence" value="ECO:0007669"/>
    <property type="project" value="UniProtKB-SubCell"/>
</dbReference>
<dbReference type="GO" id="GO:0004239">
    <property type="term" value="F:initiator methionyl aminopeptidase activity"/>
    <property type="evidence" value="ECO:0007669"/>
    <property type="project" value="UniProtKB-UniRule"/>
</dbReference>
<dbReference type="GO" id="GO:0046872">
    <property type="term" value="F:metal ion binding"/>
    <property type="evidence" value="ECO:0007669"/>
    <property type="project" value="UniProtKB-UniRule"/>
</dbReference>
<dbReference type="GO" id="GO:0070006">
    <property type="term" value="F:metalloaminopeptidase activity"/>
    <property type="evidence" value="ECO:0000318"/>
    <property type="project" value="GO_Central"/>
</dbReference>
<dbReference type="GO" id="GO:0006508">
    <property type="term" value="P:proteolysis"/>
    <property type="evidence" value="ECO:0007669"/>
    <property type="project" value="UniProtKB-KW"/>
</dbReference>
<dbReference type="CDD" id="cd01086">
    <property type="entry name" value="MetAP1"/>
    <property type="match status" value="1"/>
</dbReference>
<dbReference type="Gene3D" id="3.90.230.10">
    <property type="entry name" value="Creatinase/methionine aminopeptidase superfamily"/>
    <property type="match status" value="1"/>
</dbReference>
<dbReference type="HAMAP" id="MF_01974">
    <property type="entry name" value="MetAP_1"/>
    <property type="match status" value="1"/>
</dbReference>
<dbReference type="InterPro" id="IPR036005">
    <property type="entry name" value="Creatinase/aminopeptidase-like"/>
</dbReference>
<dbReference type="InterPro" id="IPR000994">
    <property type="entry name" value="Pept_M24"/>
</dbReference>
<dbReference type="InterPro" id="IPR001714">
    <property type="entry name" value="Pept_M24_MAP"/>
</dbReference>
<dbReference type="InterPro" id="IPR002467">
    <property type="entry name" value="Pept_M24A_MAP1"/>
</dbReference>
<dbReference type="NCBIfam" id="TIGR00500">
    <property type="entry name" value="met_pdase_I"/>
    <property type="match status" value="1"/>
</dbReference>
<dbReference type="PANTHER" id="PTHR43330">
    <property type="entry name" value="METHIONINE AMINOPEPTIDASE"/>
    <property type="match status" value="1"/>
</dbReference>
<dbReference type="PANTHER" id="PTHR43330:SF26">
    <property type="entry name" value="METHIONINE AMINOPEPTIDASE 1D, MITOCHONDRIAL"/>
    <property type="match status" value="1"/>
</dbReference>
<dbReference type="Pfam" id="PF00557">
    <property type="entry name" value="Peptidase_M24"/>
    <property type="match status" value="1"/>
</dbReference>
<dbReference type="PRINTS" id="PR00599">
    <property type="entry name" value="MAPEPTIDASE"/>
</dbReference>
<dbReference type="SUPFAM" id="SSF55920">
    <property type="entry name" value="Creatinase/aminopeptidase"/>
    <property type="match status" value="1"/>
</dbReference>
<comment type="function">
    <text evidence="1">Removes the N-terminal methionine from nascent proteins. The N-terminal methionine is often cleaved when the second residue in the primary sequence is small and uncharged (Met-Ala-, Cys, Gly, Pro, Ser, Thr, or Val).</text>
</comment>
<comment type="catalytic activity">
    <reaction evidence="1">
        <text>Release of N-terminal amino acids, preferentially methionine, from peptides and arylamides.</text>
        <dbReference type="EC" id="3.4.11.18"/>
    </reaction>
</comment>
<comment type="cofactor">
    <cofactor evidence="1">
        <name>Co(2+)</name>
        <dbReference type="ChEBI" id="CHEBI:48828"/>
    </cofactor>
    <cofactor evidence="1">
        <name>Zn(2+)</name>
        <dbReference type="ChEBI" id="CHEBI:29105"/>
    </cofactor>
    <cofactor evidence="1">
        <name>Mn(2+)</name>
        <dbReference type="ChEBI" id="CHEBI:29035"/>
    </cofactor>
    <cofactor evidence="1">
        <name>Fe(2+)</name>
        <dbReference type="ChEBI" id="CHEBI:29033"/>
    </cofactor>
    <text evidence="1">Binds 2 divalent metal cations per subunit. Has a high-affinity and a low affinity metal-binding site. The true nature of the physiological cofactor is under debate. The enzyme is active with cobalt, zinc, manganese or divalent iron ions. Most likely, methionine aminopeptidases function as mononuclear Fe(2+)-metalloproteases under physiological conditions, and the catalytically relevant metal-binding site has been assigned to the histidine-containing high-affinity site.</text>
</comment>
<comment type="subcellular location">
    <subcellularLocation>
        <location evidence="1">Mitochondrion</location>
    </subcellularLocation>
</comment>
<comment type="similarity">
    <text evidence="1">Belongs to the peptidase M24A family. Methionine aminopeptidase type 1 subfamily.</text>
</comment>
<protein>
    <recommendedName>
        <fullName evidence="1">Methionine aminopeptidase 1D, mitochondrial</fullName>
        <shortName evidence="1">MAP 1D</shortName>
        <shortName evidence="1">MetAP 1D</shortName>
        <ecNumber evidence="1">3.4.11.18</ecNumber>
    </recommendedName>
    <alternativeName>
        <fullName>Methionyl aminopeptidase type 1D, mitochondrial</fullName>
    </alternativeName>
    <alternativeName>
        <fullName evidence="1">Peptidase M 1D</fullName>
    </alternativeName>
</protein>
<feature type="transit peptide" description="Mitochondrion" evidence="1">
    <location>
        <begin position="1"/>
        <end position="58"/>
    </location>
</feature>
<feature type="chain" id="PRO_0000328514" description="Methionine aminopeptidase 1D, mitochondrial">
    <location>
        <begin position="59"/>
        <end position="404"/>
    </location>
</feature>
<feature type="region of interest" description="Disordered" evidence="2">
    <location>
        <begin position="86"/>
        <end position="109"/>
    </location>
</feature>
<feature type="binding site" evidence="1">
    <location>
        <position position="232"/>
    </location>
    <ligand>
        <name>substrate</name>
    </ligand>
</feature>
<feature type="binding site" evidence="1">
    <location>
        <position position="249"/>
    </location>
    <ligand>
        <name>a divalent metal cation</name>
        <dbReference type="ChEBI" id="CHEBI:60240"/>
        <label>1</label>
    </ligand>
</feature>
<feature type="binding site" evidence="1">
    <location>
        <position position="260"/>
    </location>
    <ligand>
        <name>a divalent metal cation</name>
        <dbReference type="ChEBI" id="CHEBI:60240"/>
        <label>1</label>
    </ligand>
</feature>
<feature type="binding site" evidence="1">
    <location>
        <position position="260"/>
    </location>
    <ligand>
        <name>a divalent metal cation</name>
        <dbReference type="ChEBI" id="CHEBI:60240"/>
        <label>2</label>
        <note>catalytic</note>
    </ligand>
</feature>
<feature type="binding site" evidence="1">
    <location>
        <position position="323"/>
    </location>
    <ligand>
        <name>a divalent metal cation</name>
        <dbReference type="ChEBI" id="CHEBI:60240"/>
        <label>2</label>
        <note>catalytic</note>
    </ligand>
</feature>
<feature type="binding site" evidence="1">
    <location>
        <position position="330"/>
    </location>
    <ligand>
        <name>substrate</name>
    </ligand>
</feature>
<feature type="binding site" evidence="1">
    <location>
        <position position="355"/>
    </location>
    <ligand>
        <name>a divalent metal cation</name>
        <dbReference type="ChEBI" id="CHEBI:60240"/>
        <label>2</label>
        <note>catalytic</note>
    </ligand>
</feature>
<feature type="binding site" evidence="1">
    <location>
        <position position="389"/>
    </location>
    <ligand>
        <name>a divalent metal cation</name>
        <dbReference type="ChEBI" id="CHEBI:60240"/>
        <label>1</label>
    </ligand>
</feature>
<feature type="binding site" evidence="1">
    <location>
        <position position="389"/>
    </location>
    <ligand>
        <name>a divalent metal cation</name>
        <dbReference type="ChEBI" id="CHEBI:60240"/>
        <label>2</label>
        <note>catalytic</note>
    </ligand>
</feature>
<evidence type="ECO:0000255" key="1">
    <source>
        <dbReference type="HAMAP-Rule" id="MF_03174"/>
    </source>
</evidence>
<evidence type="ECO:0000256" key="2">
    <source>
        <dbReference type="SAM" id="MobiDB-lite"/>
    </source>
</evidence>
<reference key="1">
    <citation type="journal article" date="2005" name="Nature">
        <title>The genome of the social amoeba Dictyostelium discoideum.</title>
        <authorList>
            <person name="Eichinger L."/>
            <person name="Pachebat J.A."/>
            <person name="Gloeckner G."/>
            <person name="Rajandream M.A."/>
            <person name="Sucgang R."/>
            <person name="Berriman M."/>
            <person name="Song J."/>
            <person name="Olsen R."/>
            <person name="Szafranski K."/>
            <person name="Xu Q."/>
            <person name="Tunggal B."/>
            <person name="Kummerfeld S."/>
            <person name="Madera M."/>
            <person name="Konfortov B.A."/>
            <person name="Rivero F."/>
            <person name="Bankier A.T."/>
            <person name="Lehmann R."/>
            <person name="Hamlin N."/>
            <person name="Davies R."/>
            <person name="Gaudet P."/>
            <person name="Fey P."/>
            <person name="Pilcher K."/>
            <person name="Chen G."/>
            <person name="Saunders D."/>
            <person name="Sodergren E.J."/>
            <person name="Davis P."/>
            <person name="Kerhornou A."/>
            <person name="Nie X."/>
            <person name="Hall N."/>
            <person name="Anjard C."/>
            <person name="Hemphill L."/>
            <person name="Bason N."/>
            <person name="Farbrother P."/>
            <person name="Desany B."/>
            <person name="Just E."/>
            <person name="Morio T."/>
            <person name="Rost R."/>
            <person name="Churcher C.M."/>
            <person name="Cooper J."/>
            <person name="Haydock S."/>
            <person name="van Driessche N."/>
            <person name="Cronin A."/>
            <person name="Goodhead I."/>
            <person name="Muzny D.M."/>
            <person name="Mourier T."/>
            <person name="Pain A."/>
            <person name="Lu M."/>
            <person name="Harper D."/>
            <person name="Lindsay R."/>
            <person name="Hauser H."/>
            <person name="James K.D."/>
            <person name="Quiles M."/>
            <person name="Madan Babu M."/>
            <person name="Saito T."/>
            <person name="Buchrieser C."/>
            <person name="Wardroper A."/>
            <person name="Felder M."/>
            <person name="Thangavelu M."/>
            <person name="Johnson D."/>
            <person name="Knights A."/>
            <person name="Loulseged H."/>
            <person name="Mungall K.L."/>
            <person name="Oliver K."/>
            <person name="Price C."/>
            <person name="Quail M.A."/>
            <person name="Urushihara H."/>
            <person name="Hernandez J."/>
            <person name="Rabbinowitsch E."/>
            <person name="Steffen D."/>
            <person name="Sanders M."/>
            <person name="Ma J."/>
            <person name="Kohara Y."/>
            <person name="Sharp S."/>
            <person name="Simmonds M.N."/>
            <person name="Spiegler S."/>
            <person name="Tivey A."/>
            <person name="Sugano S."/>
            <person name="White B."/>
            <person name="Walker D."/>
            <person name="Woodward J.R."/>
            <person name="Winckler T."/>
            <person name="Tanaka Y."/>
            <person name="Shaulsky G."/>
            <person name="Schleicher M."/>
            <person name="Weinstock G.M."/>
            <person name="Rosenthal A."/>
            <person name="Cox E.C."/>
            <person name="Chisholm R.L."/>
            <person name="Gibbs R.A."/>
            <person name="Loomis W.F."/>
            <person name="Platzer M."/>
            <person name="Kay R.R."/>
            <person name="Williams J.G."/>
            <person name="Dear P.H."/>
            <person name="Noegel A.A."/>
            <person name="Barrell B.G."/>
            <person name="Kuspa A."/>
        </authorList>
    </citation>
    <scope>NUCLEOTIDE SEQUENCE [LARGE SCALE GENOMIC DNA]</scope>
    <source>
        <strain>AX4</strain>
    </source>
</reference>